<name>EFG_ACIBC</name>
<reference key="1">
    <citation type="journal article" date="2008" name="Antimicrob. Agents Chemother.">
        <title>Whole-genome pyrosequencing of an epidemic multidrug-resistant Acinetobacter baumannii strain belonging to the European clone II group.</title>
        <authorList>
            <person name="Iacono M."/>
            <person name="Villa L."/>
            <person name="Fortini D."/>
            <person name="Bordoni R."/>
            <person name="Imperi F."/>
            <person name="Bonnal R.J."/>
            <person name="Sicheritz-Ponten T."/>
            <person name="De Bellis G."/>
            <person name="Visca P."/>
            <person name="Cassone A."/>
            <person name="Carattoli A."/>
        </authorList>
    </citation>
    <scope>NUCLEOTIDE SEQUENCE [LARGE SCALE GENOMIC DNA]</scope>
    <source>
        <strain>ACICU</strain>
    </source>
</reference>
<organism>
    <name type="scientific">Acinetobacter baumannii (strain ACICU)</name>
    <dbReference type="NCBI Taxonomy" id="405416"/>
    <lineage>
        <taxon>Bacteria</taxon>
        <taxon>Pseudomonadati</taxon>
        <taxon>Pseudomonadota</taxon>
        <taxon>Gammaproteobacteria</taxon>
        <taxon>Moraxellales</taxon>
        <taxon>Moraxellaceae</taxon>
        <taxon>Acinetobacter</taxon>
        <taxon>Acinetobacter calcoaceticus/baumannii complex</taxon>
    </lineage>
</organism>
<comment type="function">
    <text evidence="1">Catalyzes the GTP-dependent ribosomal translocation step during translation elongation. During this step, the ribosome changes from the pre-translocational (PRE) to the post-translocational (POST) state as the newly formed A-site-bound peptidyl-tRNA and P-site-bound deacylated tRNA move to the P and E sites, respectively. Catalyzes the coordinated movement of the two tRNA molecules, the mRNA and conformational changes in the ribosome.</text>
</comment>
<comment type="subcellular location">
    <subcellularLocation>
        <location evidence="1">Cytoplasm</location>
    </subcellularLocation>
</comment>
<comment type="similarity">
    <text evidence="1">Belongs to the TRAFAC class translation factor GTPase superfamily. Classic translation factor GTPase family. EF-G/EF-2 subfamily.</text>
</comment>
<keyword id="KW-0963">Cytoplasm</keyword>
<keyword id="KW-0251">Elongation factor</keyword>
<keyword id="KW-0342">GTP-binding</keyword>
<keyword id="KW-0547">Nucleotide-binding</keyword>
<keyword id="KW-0648">Protein biosynthesis</keyword>
<protein>
    <recommendedName>
        <fullName evidence="1">Elongation factor G</fullName>
        <shortName evidence="1">EF-G</shortName>
    </recommendedName>
</protein>
<proteinExistence type="inferred from homology"/>
<accession>B2HUQ4</accession>
<dbReference type="EMBL" id="CP000863">
    <property type="protein sequence ID" value="ACC56129.1"/>
    <property type="molecule type" value="Genomic_DNA"/>
</dbReference>
<dbReference type="RefSeq" id="WP_000113824.1">
    <property type="nucleotide sequence ID" value="NZ_CP031380.1"/>
</dbReference>
<dbReference type="SMR" id="B2HUQ4"/>
<dbReference type="GeneID" id="92892797"/>
<dbReference type="KEGG" id="abc:ACICU_00817"/>
<dbReference type="HOGENOM" id="CLU_002794_4_1_6"/>
<dbReference type="Proteomes" id="UP000008839">
    <property type="component" value="Chromosome"/>
</dbReference>
<dbReference type="GO" id="GO:0005737">
    <property type="term" value="C:cytoplasm"/>
    <property type="evidence" value="ECO:0007669"/>
    <property type="project" value="UniProtKB-SubCell"/>
</dbReference>
<dbReference type="GO" id="GO:0005525">
    <property type="term" value="F:GTP binding"/>
    <property type="evidence" value="ECO:0007669"/>
    <property type="project" value="UniProtKB-UniRule"/>
</dbReference>
<dbReference type="GO" id="GO:0003924">
    <property type="term" value="F:GTPase activity"/>
    <property type="evidence" value="ECO:0007669"/>
    <property type="project" value="InterPro"/>
</dbReference>
<dbReference type="GO" id="GO:0097216">
    <property type="term" value="F:guanosine tetraphosphate binding"/>
    <property type="evidence" value="ECO:0007669"/>
    <property type="project" value="UniProtKB-ARBA"/>
</dbReference>
<dbReference type="GO" id="GO:0003746">
    <property type="term" value="F:translation elongation factor activity"/>
    <property type="evidence" value="ECO:0007669"/>
    <property type="project" value="UniProtKB-UniRule"/>
</dbReference>
<dbReference type="GO" id="GO:0032790">
    <property type="term" value="P:ribosome disassembly"/>
    <property type="evidence" value="ECO:0007669"/>
    <property type="project" value="TreeGrafter"/>
</dbReference>
<dbReference type="CDD" id="cd01886">
    <property type="entry name" value="EF-G"/>
    <property type="match status" value="1"/>
</dbReference>
<dbReference type="CDD" id="cd16262">
    <property type="entry name" value="EFG_III"/>
    <property type="match status" value="1"/>
</dbReference>
<dbReference type="CDD" id="cd01434">
    <property type="entry name" value="EFG_mtEFG1_IV"/>
    <property type="match status" value="1"/>
</dbReference>
<dbReference type="CDD" id="cd03713">
    <property type="entry name" value="EFG_mtEFG_C"/>
    <property type="match status" value="1"/>
</dbReference>
<dbReference type="CDD" id="cd04088">
    <property type="entry name" value="EFG_mtEFG_II"/>
    <property type="match status" value="1"/>
</dbReference>
<dbReference type="FunFam" id="2.40.30.10:FF:000006">
    <property type="entry name" value="Elongation factor G"/>
    <property type="match status" value="1"/>
</dbReference>
<dbReference type="FunFam" id="3.30.230.10:FF:000003">
    <property type="entry name" value="Elongation factor G"/>
    <property type="match status" value="1"/>
</dbReference>
<dbReference type="FunFam" id="3.30.70.240:FF:000001">
    <property type="entry name" value="Elongation factor G"/>
    <property type="match status" value="1"/>
</dbReference>
<dbReference type="FunFam" id="3.30.70.870:FF:000001">
    <property type="entry name" value="Elongation factor G"/>
    <property type="match status" value="1"/>
</dbReference>
<dbReference type="FunFam" id="3.40.50.300:FF:000029">
    <property type="entry name" value="Elongation factor G"/>
    <property type="match status" value="1"/>
</dbReference>
<dbReference type="Gene3D" id="3.30.230.10">
    <property type="match status" value="1"/>
</dbReference>
<dbReference type="Gene3D" id="3.30.70.240">
    <property type="match status" value="1"/>
</dbReference>
<dbReference type="Gene3D" id="3.30.70.870">
    <property type="entry name" value="Elongation Factor G (Translational Gtpase), domain 3"/>
    <property type="match status" value="1"/>
</dbReference>
<dbReference type="Gene3D" id="3.40.50.300">
    <property type="entry name" value="P-loop containing nucleotide triphosphate hydrolases"/>
    <property type="match status" value="1"/>
</dbReference>
<dbReference type="Gene3D" id="2.40.30.10">
    <property type="entry name" value="Translation factors"/>
    <property type="match status" value="1"/>
</dbReference>
<dbReference type="HAMAP" id="MF_00054_B">
    <property type="entry name" value="EF_G_EF_2_B"/>
    <property type="match status" value="1"/>
</dbReference>
<dbReference type="InterPro" id="IPR041095">
    <property type="entry name" value="EFG_II"/>
</dbReference>
<dbReference type="InterPro" id="IPR009022">
    <property type="entry name" value="EFG_III"/>
</dbReference>
<dbReference type="InterPro" id="IPR035647">
    <property type="entry name" value="EFG_III/V"/>
</dbReference>
<dbReference type="InterPro" id="IPR047872">
    <property type="entry name" value="EFG_IV"/>
</dbReference>
<dbReference type="InterPro" id="IPR035649">
    <property type="entry name" value="EFG_V"/>
</dbReference>
<dbReference type="InterPro" id="IPR000640">
    <property type="entry name" value="EFG_V-like"/>
</dbReference>
<dbReference type="InterPro" id="IPR004161">
    <property type="entry name" value="EFTu-like_2"/>
</dbReference>
<dbReference type="InterPro" id="IPR031157">
    <property type="entry name" value="G_TR_CS"/>
</dbReference>
<dbReference type="InterPro" id="IPR027417">
    <property type="entry name" value="P-loop_NTPase"/>
</dbReference>
<dbReference type="InterPro" id="IPR020568">
    <property type="entry name" value="Ribosomal_Su5_D2-typ_SF"/>
</dbReference>
<dbReference type="InterPro" id="IPR014721">
    <property type="entry name" value="Ribsml_uS5_D2-typ_fold_subgr"/>
</dbReference>
<dbReference type="InterPro" id="IPR005225">
    <property type="entry name" value="Small_GTP-bd"/>
</dbReference>
<dbReference type="InterPro" id="IPR000795">
    <property type="entry name" value="T_Tr_GTP-bd_dom"/>
</dbReference>
<dbReference type="InterPro" id="IPR009000">
    <property type="entry name" value="Transl_B-barrel_sf"/>
</dbReference>
<dbReference type="InterPro" id="IPR004540">
    <property type="entry name" value="Transl_elong_EFG/EF2"/>
</dbReference>
<dbReference type="InterPro" id="IPR005517">
    <property type="entry name" value="Transl_elong_EFG/EF2_IV"/>
</dbReference>
<dbReference type="NCBIfam" id="TIGR00484">
    <property type="entry name" value="EF-G"/>
    <property type="match status" value="1"/>
</dbReference>
<dbReference type="NCBIfam" id="NF009381">
    <property type="entry name" value="PRK12740.1-5"/>
    <property type="match status" value="1"/>
</dbReference>
<dbReference type="NCBIfam" id="TIGR00231">
    <property type="entry name" value="small_GTP"/>
    <property type="match status" value="1"/>
</dbReference>
<dbReference type="PANTHER" id="PTHR43261:SF1">
    <property type="entry name" value="RIBOSOME-RELEASING FACTOR 2, MITOCHONDRIAL"/>
    <property type="match status" value="1"/>
</dbReference>
<dbReference type="PANTHER" id="PTHR43261">
    <property type="entry name" value="TRANSLATION ELONGATION FACTOR G-RELATED"/>
    <property type="match status" value="1"/>
</dbReference>
<dbReference type="Pfam" id="PF00679">
    <property type="entry name" value="EFG_C"/>
    <property type="match status" value="1"/>
</dbReference>
<dbReference type="Pfam" id="PF14492">
    <property type="entry name" value="EFG_III"/>
    <property type="match status" value="1"/>
</dbReference>
<dbReference type="Pfam" id="PF03764">
    <property type="entry name" value="EFG_IV"/>
    <property type="match status" value="1"/>
</dbReference>
<dbReference type="Pfam" id="PF00009">
    <property type="entry name" value="GTP_EFTU"/>
    <property type="match status" value="1"/>
</dbReference>
<dbReference type="Pfam" id="PF03144">
    <property type="entry name" value="GTP_EFTU_D2"/>
    <property type="match status" value="1"/>
</dbReference>
<dbReference type="PRINTS" id="PR00315">
    <property type="entry name" value="ELONGATNFCT"/>
</dbReference>
<dbReference type="SMART" id="SM00838">
    <property type="entry name" value="EFG_C"/>
    <property type="match status" value="1"/>
</dbReference>
<dbReference type="SMART" id="SM00889">
    <property type="entry name" value="EFG_IV"/>
    <property type="match status" value="1"/>
</dbReference>
<dbReference type="SUPFAM" id="SSF54980">
    <property type="entry name" value="EF-G C-terminal domain-like"/>
    <property type="match status" value="2"/>
</dbReference>
<dbReference type="SUPFAM" id="SSF52540">
    <property type="entry name" value="P-loop containing nucleoside triphosphate hydrolases"/>
    <property type="match status" value="1"/>
</dbReference>
<dbReference type="SUPFAM" id="SSF54211">
    <property type="entry name" value="Ribosomal protein S5 domain 2-like"/>
    <property type="match status" value="1"/>
</dbReference>
<dbReference type="SUPFAM" id="SSF50447">
    <property type="entry name" value="Translation proteins"/>
    <property type="match status" value="1"/>
</dbReference>
<dbReference type="PROSITE" id="PS00301">
    <property type="entry name" value="G_TR_1"/>
    <property type="match status" value="1"/>
</dbReference>
<dbReference type="PROSITE" id="PS51722">
    <property type="entry name" value="G_TR_2"/>
    <property type="match status" value="1"/>
</dbReference>
<evidence type="ECO:0000255" key="1">
    <source>
        <dbReference type="HAMAP-Rule" id="MF_00054"/>
    </source>
</evidence>
<sequence length="712" mass="78840">MARQTPITRYRNIGISAHIDAGKTTTTERILFYTGVSHKIGEVHDGAATMDWMEQEQERGITITSAATTCFWSGMGNQFPQHRINVIDTPGHVDFTIEVERSMRVLDGACMVYCAVGGVQPQSETVWRQANKYKVPRLAFVNKMDRTGANFFRVVEQMKTRLGANPVPIVVPIGAEDTFTGVVDLIEMKAIIWDEASQGMKFEYGEIPADLVDTAQEWRTNMVEAAAEASEELMDKYLEEGDLSKEDIIAGLRARTLASEIQVMLCGSAFKNKGVQRMLDAVIEFLPSPTEVKAIEGILDDKDETKASREASDEAPFSALAFKIMNDKFVGNLTFVRVYSGVLKQGDAVYNPVKSKRERIGRIVQMHANERQDIDEIRAGDIAACVGLKDVTTGDTLCDEKNIITLERMEFPDPVIQLAVEPKTKADQEKMSIALGRLAKEDPSFRVHTDEESGQTIIAGMGELHLDIIVDRMKREFGVEANIGKPMVAYRETIKKTVEQEGKFVRQTGGKGKFGHVYVRLEPLDVEAAGKEYEFAEEVVGGVVPKEFFGAVDKGIQERMKNGVLAGYPVVGVKAVLFDGSYHDVDSDELSFKMAGSYAFRDGFMKADPVLLEPIMKVEVETPEDYMGDIMGDLNRRRGMVQGMDDLPGGTKAIKAEVPLAEMFGYATQMRSMSQGRATYSMEFAKYAETPRNVAEGIIAKFQAGGKKGDDE</sequence>
<gene>
    <name evidence="1" type="primary">fusA</name>
    <name type="ordered locus">ACICU_00817</name>
</gene>
<feature type="chain" id="PRO_1000091684" description="Elongation factor G">
    <location>
        <begin position="1"/>
        <end position="712"/>
    </location>
</feature>
<feature type="domain" description="tr-type G">
    <location>
        <begin position="8"/>
        <end position="290"/>
    </location>
</feature>
<feature type="binding site" evidence="1">
    <location>
        <begin position="17"/>
        <end position="24"/>
    </location>
    <ligand>
        <name>GTP</name>
        <dbReference type="ChEBI" id="CHEBI:37565"/>
    </ligand>
</feature>
<feature type="binding site" evidence="1">
    <location>
        <begin position="88"/>
        <end position="92"/>
    </location>
    <ligand>
        <name>GTP</name>
        <dbReference type="ChEBI" id="CHEBI:37565"/>
    </ligand>
</feature>
<feature type="binding site" evidence="1">
    <location>
        <begin position="142"/>
        <end position="145"/>
    </location>
    <ligand>
        <name>GTP</name>
        <dbReference type="ChEBI" id="CHEBI:37565"/>
    </ligand>
</feature>